<proteinExistence type="inferred from homology"/>
<sequence>MSTHVTFDYSKALSFIGEHEITYLRDAVKVTHHAIHEKTGAGNDFLGWVDLPLQYDKEEFARIQKCAEKIKNDSDILLVVGIGGSYLGARAAIEMLNHSFYNTLSKEQRKTPQVLFVGQNISSTYMKDLMDVLEGKDFSINVISKSGTTTEPALAFRIFRKLLEEKYGKEEARKRIYATTDKARGALKTLADNEGYETFVIPDDVGGRFSVLTPVGLLPIAVSGLNIEEMMKGAAAGRDDFGTSELEENPAYQYAVVRNALYNKGKTIEMLVNYEPALQYFAEWWKQLFGESEGKDQKGIFPSSANFSTDLHSLGQYVQEGRRDLFETVLKVGKSTHELTIESEENDLDGLNYLAGETVDFVNTKAYEGTLLAHSDGGVPNLIVNIPELNEYTFGYLVYFFEKACAMSGYLLGVNPFDQPGVEAYKKNMFALLGKPGFEELKAELEERLK</sequence>
<name>G6PI_BACC0</name>
<comment type="function">
    <text evidence="1">Catalyzes the reversible isomerization of glucose-6-phosphate to fructose-6-phosphate.</text>
</comment>
<comment type="catalytic activity">
    <reaction evidence="1">
        <text>alpha-D-glucose 6-phosphate = beta-D-fructose 6-phosphate</text>
        <dbReference type="Rhea" id="RHEA:11816"/>
        <dbReference type="ChEBI" id="CHEBI:57634"/>
        <dbReference type="ChEBI" id="CHEBI:58225"/>
        <dbReference type="EC" id="5.3.1.9"/>
    </reaction>
</comment>
<comment type="pathway">
    <text evidence="1">Carbohydrate biosynthesis; gluconeogenesis.</text>
</comment>
<comment type="pathway">
    <text evidence="1">Carbohydrate degradation; glycolysis; D-glyceraldehyde 3-phosphate and glycerone phosphate from D-glucose: step 2/4.</text>
</comment>
<comment type="subcellular location">
    <subcellularLocation>
        <location evidence="1">Cytoplasm</location>
    </subcellularLocation>
</comment>
<comment type="similarity">
    <text evidence="1">Belongs to the GPI family.</text>
</comment>
<accession>B7JDF6</accession>
<organism>
    <name type="scientific">Bacillus cereus (strain AH820)</name>
    <dbReference type="NCBI Taxonomy" id="405535"/>
    <lineage>
        <taxon>Bacteria</taxon>
        <taxon>Bacillati</taxon>
        <taxon>Bacillota</taxon>
        <taxon>Bacilli</taxon>
        <taxon>Bacillales</taxon>
        <taxon>Bacillaceae</taxon>
        <taxon>Bacillus</taxon>
        <taxon>Bacillus cereus group</taxon>
    </lineage>
</organism>
<keyword id="KW-0963">Cytoplasm</keyword>
<keyword id="KW-0312">Gluconeogenesis</keyword>
<keyword id="KW-0324">Glycolysis</keyword>
<keyword id="KW-0413">Isomerase</keyword>
<keyword id="KW-0597">Phosphoprotein</keyword>
<dbReference type="EC" id="5.3.1.9" evidence="1"/>
<dbReference type="EMBL" id="CP001283">
    <property type="protein sequence ID" value="ACK91001.1"/>
    <property type="molecule type" value="Genomic_DNA"/>
</dbReference>
<dbReference type="RefSeq" id="WP_000103658.1">
    <property type="nucleotide sequence ID" value="NC_011773.1"/>
</dbReference>
<dbReference type="SMR" id="B7JDF6"/>
<dbReference type="KEGG" id="bcu:BCAH820_5009"/>
<dbReference type="HOGENOM" id="CLU_037303_0_1_9"/>
<dbReference type="UniPathway" id="UPA00109">
    <property type="reaction ID" value="UER00181"/>
</dbReference>
<dbReference type="UniPathway" id="UPA00138"/>
<dbReference type="Proteomes" id="UP000001363">
    <property type="component" value="Chromosome"/>
</dbReference>
<dbReference type="GO" id="GO:0005829">
    <property type="term" value="C:cytosol"/>
    <property type="evidence" value="ECO:0007669"/>
    <property type="project" value="TreeGrafter"/>
</dbReference>
<dbReference type="GO" id="GO:0097367">
    <property type="term" value="F:carbohydrate derivative binding"/>
    <property type="evidence" value="ECO:0007669"/>
    <property type="project" value="InterPro"/>
</dbReference>
<dbReference type="GO" id="GO:0004347">
    <property type="term" value="F:glucose-6-phosphate isomerase activity"/>
    <property type="evidence" value="ECO:0007669"/>
    <property type="project" value="UniProtKB-UniRule"/>
</dbReference>
<dbReference type="GO" id="GO:0048029">
    <property type="term" value="F:monosaccharide binding"/>
    <property type="evidence" value="ECO:0007669"/>
    <property type="project" value="TreeGrafter"/>
</dbReference>
<dbReference type="GO" id="GO:0006094">
    <property type="term" value="P:gluconeogenesis"/>
    <property type="evidence" value="ECO:0007669"/>
    <property type="project" value="UniProtKB-UniRule"/>
</dbReference>
<dbReference type="GO" id="GO:0051156">
    <property type="term" value="P:glucose 6-phosphate metabolic process"/>
    <property type="evidence" value="ECO:0007669"/>
    <property type="project" value="TreeGrafter"/>
</dbReference>
<dbReference type="GO" id="GO:0006096">
    <property type="term" value="P:glycolytic process"/>
    <property type="evidence" value="ECO:0007669"/>
    <property type="project" value="UniProtKB-UniRule"/>
</dbReference>
<dbReference type="CDD" id="cd05015">
    <property type="entry name" value="SIS_PGI_1"/>
    <property type="match status" value="1"/>
</dbReference>
<dbReference type="CDD" id="cd05016">
    <property type="entry name" value="SIS_PGI_2"/>
    <property type="match status" value="1"/>
</dbReference>
<dbReference type="FunFam" id="3.40.50.10490:FF:000015">
    <property type="entry name" value="Glucose-6-phosphate isomerase"/>
    <property type="match status" value="1"/>
</dbReference>
<dbReference type="FunFam" id="3.40.50.10490:FF:000016">
    <property type="entry name" value="Glucose-6-phosphate isomerase"/>
    <property type="match status" value="1"/>
</dbReference>
<dbReference type="FunFam" id="3.40.50.10490:FF:000020">
    <property type="entry name" value="Glucose-6-phosphate isomerase"/>
    <property type="match status" value="1"/>
</dbReference>
<dbReference type="Gene3D" id="3.40.50.10490">
    <property type="entry name" value="Glucose-6-phosphate isomerase like protein, domain 1"/>
    <property type="match status" value="3"/>
</dbReference>
<dbReference type="HAMAP" id="MF_00473">
    <property type="entry name" value="G6P_isomerase"/>
    <property type="match status" value="1"/>
</dbReference>
<dbReference type="InterPro" id="IPR001672">
    <property type="entry name" value="G6P_Isomerase"/>
</dbReference>
<dbReference type="InterPro" id="IPR018189">
    <property type="entry name" value="Phosphoglucose_isomerase_CS"/>
</dbReference>
<dbReference type="InterPro" id="IPR046348">
    <property type="entry name" value="SIS_dom_sf"/>
</dbReference>
<dbReference type="InterPro" id="IPR035476">
    <property type="entry name" value="SIS_PGI_1"/>
</dbReference>
<dbReference type="InterPro" id="IPR035482">
    <property type="entry name" value="SIS_PGI_2"/>
</dbReference>
<dbReference type="NCBIfam" id="NF010697">
    <property type="entry name" value="PRK14097.1"/>
    <property type="match status" value="1"/>
</dbReference>
<dbReference type="PANTHER" id="PTHR11469">
    <property type="entry name" value="GLUCOSE-6-PHOSPHATE ISOMERASE"/>
    <property type="match status" value="1"/>
</dbReference>
<dbReference type="PANTHER" id="PTHR11469:SF1">
    <property type="entry name" value="GLUCOSE-6-PHOSPHATE ISOMERASE"/>
    <property type="match status" value="1"/>
</dbReference>
<dbReference type="Pfam" id="PF00342">
    <property type="entry name" value="PGI"/>
    <property type="match status" value="1"/>
</dbReference>
<dbReference type="PRINTS" id="PR00662">
    <property type="entry name" value="G6PISOMERASE"/>
</dbReference>
<dbReference type="SUPFAM" id="SSF53697">
    <property type="entry name" value="SIS domain"/>
    <property type="match status" value="1"/>
</dbReference>
<dbReference type="PROSITE" id="PS00765">
    <property type="entry name" value="P_GLUCOSE_ISOMERASE_1"/>
    <property type="match status" value="1"/>
</dbReference>
<dbReference type="PROSITE" id="PS00174">
    <property type="entry name" value="P_GLUCOSE_ISOMERASE_2"/>
    <property type="match status" value="1"/>
</dbReference>
<dbReference type="PROSITE" id="PS51463">
    <property type="entry name" value="P_GLUCOSE_ISOMERASE_3"/>
    <property type="match status" value="1"/>
</dbReference>
<reference key="1">
    <citation type="submission" date="2008-10" db="EMBL/GenBank/DDBJ databases">
        <title>Genome sequence of Bacillus cereus AH820.</title>
        <authorList>
            <person name="Dodson R.J."/>
            <person name="Durkin A.S."/>
            <person name="Rosovitz M.J."/>
            <person name="Rasko D.A."/>
            <person name="Hoffmaster A."/>
            <person name="Ravel J."/>
            <person name="Sutton G."/>
        </authorList>
    </citation>
    <scope>NUCLEOTIDE SEQUENCE [LARGE SCALE GENOMIC DNA]</scope>
    <source>
        <strain>AH820</strain>
    </source>
</reference>
<gene>
    <name evidence="1" type="primary">pgi</name>
    <name type="ordered locus">BCAH820_5009</name>
</gene>
<protein>
    <recommendedName>
        <fullName evidence="1">Glucose-6-phosphate isomerase</fullName>
        <shortName evidence="1">GPI</shortName>
        <ecNumber evidence="1">5.3.1.9</ecNumber>
    </recommendedName>
    <alternativeName>
        <fullName evidence="1">Phosphoglucose isomerase</fullName>
        <shortName evidence="1">PGI</shortName>
    </alternativeName>
    <alternativeName>
        <fullName evidence="1">Phosphohexose isomerase</fullName>
        <shortName evidence="1">PHI</shortName>
    </alternativeName>
</protein>
<evidence type="ECO:0000255" key="1">
    <source>
        <dbReference type="HAMAP-Rule" id="MF_00473"/>
    </source>
</evidence>
<feature type="chain" id="PRO_1000125691" description="Glucose-6-phosphate isomerase">
    <location>
        <begin position="1"/>
        <end position="450"/>
    </location>
</feature>
<feature type="active site" description="Proton donor" evidence="1">
    <location>
        <position position="291"/>
    </location>
</feature>
<feature type="active site" evidence="1">
    <location>
        <position position="312"/>
    </location>
</feature>
<feature type="active site" evidence="1">
    <location>
        <position position="426"/>
    </location>
</feature>
<feature type="modified residue" description="Phosphothreonine" evidence="1">
    <location>
        <position position="39"/>
    </location>
</feature>